<proteinExistence type="inferred from homology"/>
<protein>
    <recommendedName>
        <fullName evidence="1">UPF0145 protein YbjQ</fullName>
    </recommendedName>
</protein>
<sequence>MQFSTTPTLEGQTIVEYCGVVTGEAILGANIFRDFFAGIRDIVGGRSGAYEKELRKAREIAFEELGDQARALGADAVVGIDIDYETVGQNGSMLMVSVSGTAVKTRR</sequence>
<dbReference type="EMBL" id="CP000970">
    <property type="protein sequence ID" value="ACB19073.1"/>
    <property type="molecule type" value="Genomic_DNA"/>
</dbReference>
<dbReference type="RefSeq" id="WP_001160731.1">
    <property type="nucleotide sequence ID" value="NC_010498.1"/>
</dbReference>
<dbReference type="SMR" id="B1LN20"/>
<dbReference type="KEGG" id="ecm:EcSMS35_0895"/>
<dbReference type="HOGENOM" id="CLU_117144_3_0_6"/>
<dbReference type="Proteomes" id="UP000007011">
    <property type="component" value="Chromosome"/>
</dbReference>
<dbReference type="Gene3D" id="3.30.110.70">
    <property type="entry name" value="Hypothetical protein apc22750. Chain B"/>
    <property type="match status" value="1"/>
</dbReference>
<dbReference type="HAMAP" id="MF_00338">
    <property type="entry name" value="UPF0145"/>
    <property type="match status" value="1"/>
</dbReference>
<dbReference type="InterPro" id="IPR035439">
    <property type="entry name" value="UPF0145_dom_sf"/>
</dbReference>
<dbReference type="InterPro" id="IPR002765">
    <property type="entry name" value="UPF0145_YbjQ-like"/>
</dbReference>
<dbReference type="NCBIfam" id="NF002776">
    <property type="entry name" value="PRK02877.1"/>
    <property type="match status" value="1"/>
</dbReference>
<dbReference type="PANTHER" id="PTHR34068">
    <property type="entry name" value="UPF0145 PROTEIN YBJQ"/>
    <property type="match status" value="1"/>
</dbReference>
<dbReference type="PANTHER" id="PTHR34068:SF1">
    <property type="entry name" value="UPF0145 PROTEIN YBJQ"/>
    <property type="match status" value="1"/>
</dbReference>
<dbReference type="Pfam" id="PF01906">
    <property type="entry name" value="YbjQ_1"/>
    <property type="match status" value="1"/>
</dbReference>
<dbReference type="SUPFAM" id="SSF117782">
    <property type="entry name" value="YbjQ-like"/>
    <property type="match status" value="1"/>
</dbReference>
<evidence type="ECO:0000255" key="1">
    <source>
        <dbReference type="HAMAP-Rule" id="MF_00338"/>
    </source>
</evidence>
<gene>
    <name evidence="1" type="primary">ybjQ</name>
    <name type="ordered locus">EcSMS35_0895</name>
</gene>
<reference key="1">
    <citation type="journal article" date="2008" name="J. Bacteriol.">
        <title>Insights into the environmental resistance gene pool from the genome sequence of the multidrug-resistant environmental isolate Escherichia coli SMS-3-5.</title>
        <authorList>
            <person name="Fricke W.F."/>
            <person name="Wright M.S."/>
            <person name="Lindell A.H."/>
            <person name="Harkins D.M."/>
            <person name="Baker-Austin C."/>
            <person name="Ravel J."/>
            <person name="Stepanauskas R."/>
        </authorList>
    </citation>
    <scope>NUCLEOTIDE SEQUENCE [LARGE SCALE GENOMIC DNA]</scope>
    <source>
        <strain>SMS-3-5 / SECEC</strain>
    </source>
</reference>
<name>YBJQ_ECOSM</name>
<feature type="chain" id="PRO_1000119996" description="UPF0145 protein YbjQ">
    <location>
        <begin position="1"/>
        <end position="107"/>
    </location>
</feature>
<accession>B1LN20</accession>
<comment type="similarity">
    <text evidence="1">Belongs to the UPF0145 family.</text>
</comment>
<organism>
    <name type="scientific">Escherichia coli (strain SMS-3-5 / SECEC)</name>
    <dbReference type="NCBI Taxonomy" id="439855"/>
    <lineage>
        <taxon>Bacteria</taxon>
        <taxon>Pseudomonadati</taxon>
        <taxon>Pseudomonadota</taxon>
        <taxon>Gammaproteobacteria</taxon>
        <taxon>Enterobacterales</taxon>
        <taxon>Enterobacteriaceae</taxon>
        <taxon>Escherichia</taxon>
    </lineage>
</organism>